<reference key="1">
    <citation type="journal article" date="1999" name="Nature">
        <title>Sequence and analysis of chromosome 2 of the plant Arabidopsis thaliana.</title>
        <authorList>
            <person name="Lin X."/>
            <person name="Kaul S."/>
            <person name="Rounsley S.D."/>
            <person name="Shea T.P."/>
            <person name="Benito M.-I."/>
            <person name="Town C.D."/>
            <person name="Fujii C.Y."/>
            <person name="Mason T.M."/>
            <person name="Bowman C.L."/>
            <person name="Barnstead M.E."/>
            <person name="Feldblyum T.V."/>
            <person name="Buell C.R."/>
            <person name="Ketchum K.A."/>
            <person name="Lee J.J."/>
            <person name="Ronning C.M."/>
            <person name="Koo H.L."/>
            <person name="Moffat K.S."/>
            <person name="Cronin L.A."/>
            <person name="Shen M."/>
            <person name="Pai G."/>
            <person name="Van Aken S."/>
            <person name="Umayam L."/>
            <person name="Tallon L.J."/>
            <person name="Gill J.E."/>
            <person name="Adams M.D."/>
            <person name="Carrera A.J."/>
            <person name="Creasy T.H."/>
            <person name="Goodman H.M."/>
            <person name="Somerville C.R."/>
            <person name="Copenhaver G.P."/>
            <person name="Preuss D."/>
            <person name="Nierman W.C."/>
            <person name="White O."/>
            <person name="Eisen J.A."/>
            <person name="Salzberg S.L."/>
            <person name="Fraser C.M."/>
            <person name="Venter J.C."/>
        </authorList>
    </citation>
    <scope>NUCLEOTIDE SEQUENCE [LARGE SCALE GENOMIC DNA]</scope>
    <source>
        <strain>cv. Columbia</strain>
    </source>
</reference>
<reference key="2">
    <citation type="journal article" date="2017" name="Plant J.">
        <title>Araport11: a complete reannotation of the Arabidopsis thaliana reference genome.</title>
        <authorList>
            <person name="Cheng C.Y."/>
            <person name="Krishnakumar V."/>
            <person name="Chan A.P."/>
            <person name="Thibaud-Nissen F."/>
            <person name="Schobel S."/>
            <person name="Town C.D."/>
        </authorList>
    </citation>
    <scope>GENOME REANNOTATION</scope>
    <source>
        <strain>cv. Columbia</strain>
    </source>
</reference>
<reference key="3">
    <citation type="journal article" date="2006" name="Plant Biotechnol. J.">
        <title>Simultaneous high-throughput recombinational cloning of open reading frames in closed and open configurations.</title>
        <authorList>
            <person name="Underwood B.A."/>
            <person name="Vanderhaeghen R."/>
            <person name="Whitford R."/>
            <person name="Town C.D."/>
            <person name="Hilson P."/>
        </authorList>
    </citation>
    <scope>NUCLEOTIDE SEQUENCE [LARGE SCALE MRNA] OF 83-344 (ISOFORM 2)</scope>
    <source>
        <strain>cv. Columbia</strain>
    </source>
</reference>
<reference key="4">
    <citation type="journal article" date="2002" name="Plant Cell">
        <title>A novel superfamily of transporters for allantoin and other oxo derivatives of nitrogen heterocyclic compounds in Arabidopsis.</title>
        <authorList>
            <person name="Desimone M."/>
            <person name="Catoni E."/>
            <person name="Ludewig U."/>
            <person name="Hilpert M."/>
            <person name="Schneider A."/>
            <person name="Kunze R."/>
            <person name="Tegeder M."/>
            <person name="Frommer W.B."/>
            <person name="Schumacher K."/>
        </authorList>
    </citation>
    <scope>GENE FAMILY</scope>
    <scope>NOMENCLATURE</scope>
</reference>
<gene>
    <name evidence="3" type="primary">UPS3</name>
    <name evidence="5" type="ordered locus">At2g03600</name>
    <name evidence="6" type="ORF">F19B11.5</name>
</gene>
<dbReference type="EMBL" id="AC006836">
    <property type="protein sequence ID" value="AAD20068.1"/>
    <property type="molecule type" value="Genomic_DNA"/>
</dbReference>
<dbReference type="EMBL" id="CP002685">
    <property type="protein sequence ID" value="AEC05719.1"/>
    <property type="molecule type" value="Genomic_DNA"/>
</dbReference>
<dbReference type="EMBL" id="CP002685">
    <property type="protein sequence ID" value="ANM62084.1"/>
    <property type="molecule type" value="Genomic_DNA"/>
</dbReference>
<dbReference type="EMBL" id="DQ446463">
    <property type="protein sequence ID" value="ABE65799.1"/>
    <property type="molecule type" value="mRNA"/>
</dbReference>
<dbReference type="PIR" id="D84450">
    <property type="entry name" value="D84450"/>
</dbReference>
<dbReference type="RefSeq" id="NP_001118258.1">
    <property type="nucleotide sequence ID" value="NM_001124786.2"/>
</dbReference>
<dbReference type="RefSeq" id="NP_001324264.1">
    <molecule id="Q9ZPR6-2"/>
    <property type="nucleotide sequence ID" value="NM_001335193.1"/>
</dbReference>
<dbReference type="RefSeq" id="NP_178458.2">
    <molecule id="Q9ZPR6-2"/>
    <property type="nucleotide sequence ID" value="NM_126410.2"/>
</dbReference>
<dbReference type="STRING" id="3702.Q9ZPR6"/>
<dbReference type="EnsemblPlants" id="AT2G03600.1">
    <molecule id="Q9ZPR6-2"/>
    <property type="protein sequence ID" value="AT2G03600.1"/>
    <property type="gene ID" value="AT2G03600"/>
</dbReference>
<dbReference type="EnsemblPlants" id="AT2G03600.6">
    <molecule id="Q9ZPR6-2"/>
    <property type="protein sequence ID" value="AT2G03600.6"/>
    <property type="gene ID" value="AT2G03600"/>
</dbReference>
<dbReference type="GeneID" id="814889"/>
<dbReference type="Gramene" id="AT2G03600.1">
    <molecule id="Q9ZPR6-2"/>
    <property type="protein sequence ID" value="AT2G03600.1"/>
    <property type="gene ID" value="AT2G03600"/>
</dbReference>
<dbReference type="Gramene" id="AT2G03600.6">
    <molecule id="Q9ZPR6-2"/>
    <property type="protein sequence ID" value="AT2G03600.6"/>
    <property type="gene ID" value="AT2G03600"/>
</dbReference>
<dbReference type="KEGG" id="ath:AT2G03600"/>
<dbReference type="Araport" id="AT2G03600"/>
<dbReference type="TAIR" id="AT2G03600">
    <property type="gene designation" value="UPS3"/>
</dbReference>
<dbReference type="InParanoid" id="Q9ZPR6"/>
<dbReference type="PRO" id="PR:Q9ZPR6"/>
<dbReference type="Proteomes" id="UP000006548">
    <property type="component" value="Chromosome 2"/>
</dbReference>
<dbReference type="ExpressionAtlas" id="Q9ZPR6">
    <property type="expression patterns" value="baseline and differential"/>
</dbReference>
<dbReference type="GO" id="GO:0016020">
    <property type="term" value="C:membrane"/>
    <property type="evidence" value="ECO:0007669"/>
    <property type="project" value="UniProtKB-SubCell"/>
</dbReference>
<dbReference type="GO" id="GO:0005524">
    <property type="term" value="F:ATP binding"/>
    <property type="evidence" value="ECO:0007669"/>
    <property type="project" value="UniProtKB-KW"/>
</dbReference>
<dbReference type="GO" id="GO:0022857">
    <property type="term" value="F:transmembrane transporter activity"/>
    <property type="evidence" value="ECO:0007669"/>
    <property type="project" value="InterPro"/>
</dbReference>
<dbReference type="InterPro" id="IPR030189">
    <property type="entry name" value="UPS_plant"/>
</dbReference>
<dbReference type="InterPro" id="IPR009834">
    <property type="entry name" value="Ureide_permease"/>
</dbReference>
<dbReference type="PANTHER" id="PTHR31081:SF5">
    <property type="entry name" value="UREIDE PERMEASE 1-RELATED"/>
    <property type="match status" value="1"/>
</dbReference>
<dbReference type="PANTHER" id="PTHR31081">
    <property type="entry name" value="UREIDE PERMEASE 1-RELATED-RELATED"/>
    <property type="match status" value="1"/>
</dbReference>
<dbReference type="Pfam" id="PF07168">
    <property type="entry name" value="Ureide_permease"/>
    <property type="match status" value="1"/>
</dbReference>
<protein>
    <recommendedName>
        <fullName evidence="3">Ureide permease 3</fullName>
        <shortName evidence="3">AtUPS3</shortName>
    </recommendedName>
</protein>
<comment type="function">
    <text evidence="1">Proton-coupled transporter that transports a wide spectrum of oxo derivatives of heterocyclic nitrogen compounds.</text>
</comment>
<comment type="subcellular location">
    <subcellularLocation>
        <location evidence="2">Membrane</location>
        <topology evidence="2">Multi-pass membrane protein</topology>
    </subcellularLocation>
</comment>
<comment type="alternative products">
    <event type="alternative splicing"/>
    <isoform>
        <id>Q9ZPR6-1</id>
        <name>1</name>
        <sequence type="displayed"/>
    </isoform>
    <isoform>
        <id>Q9ZPR6-2</id>
        <name>2</name>
        <sequence type="described" ref="VSP_057674 VSP_057675"/>
    </isoform>
</comment>
<comment type="similarity">
    <text evidence="4">Belongs to the plant ureide permease (TC 2.A.7.19) family.</text>
</comment>
<accession>Q9ZPR6</accession>
<accession>Q1PFA0</accession>
<evidence type="ECO:0000250" key="1">
    <source>
        <dbReference type="UniProtKB" id="Q9ZPR7"/>
    </source>
</evidence>
<evidence type="ECO:0000255" key="2"/>
<evidence type="ECO:0000303" key="3">
    <source>
    </source>
</evidence>
<evidence type="ECO:0000305" key="4"/>
<evidence type="ECO:0000312" key="5">
    <source>
        <dbReference type="Araport" id="AT2G03600"/>
    </source>
</evidence>
<evidence type="ECO:0000312" key="6">
    <source>
        <dbReference type="EMBL" id="AAD20068.1"/>
    </source>
</evidence>
<organism>
    <name type="scientific">Arabidopsis thaliana</name>
    <name type="common">Mouse-ear cress</name>
    <dbReference type="NCBI Taxonomy" id="3702"/>
    <lineage>
        <taxon>Eukaryota</taxon>
        <taxon>Viridiplantae</taxon>
        <taxon>Streptophyta</taxon>
        <taxon>Embryophyta</taxon>
        <taxon>Tracheophyta</taxon>
        <taxon>Spermatophyta</taxon>
        <taxon>Magnoliopsida</taxon>
        <taxon>eudicotyledons</taxon>
        <taxon>Gunneridae</taxon>
        <taxon>Pentapetalae</taxon>
        <taxon>rosids</taxon>
        <taxon>malvids</taxon>
        <taxon>Brassicales</taxon>
        <taxon>Brassicaceae</taxon>
        <taxon>Camelineae</taxon>
        <taxon>Arabidopsis</taxon>
    </lineage>
</organism>
<sequence length="344" mass="37634">MYVIESKGGTITCMLLALLFLGTWPAIMTLTERRGRLPQHTYLDYTLTNLLAAVIIAFTLGEISPSRPNFTTQLSQDNWPSVMFAMAGGIFLSLGTLATQYAWAFVGLSVTEVITASIAVVIGTTLNYFLDDRINRAEVLFPGVACFLIAVCFGSAVHKSNAADNKSKLQGFKSLETTSSFQMETSSIKEGKAKVGTADFLIEVEKQRAIKVFGKSTIIGLAITFFAVPKLNVYTAFFYFSISSFGVGLILNIIFLYWPILGLPRSSFKAYLNDWNGRGWSFLAGFLCGFGNGLQFMGGQAAGYAAAGAVQIENKHFGGYCCLENTKDHQEKHIHFLSVCYLCS</sequence>
<feature type="chain" id="PRO_0000221647" description="Ureide permease 3">
    <location>
        <begin position="1"/>
        <end position="344"/>
    </location>
</feature>
<feature type="topological domain" description="Extracellular" evidence="2">
    <location>
        <begin position="1"/>
        <end position="10"/>
    </location>
</feature>
<feature type="transmembrane region" description="Helical" evidence="2">
    <location>
        <begin position="11"/>
        <end position="31"/>
    </location>
</feature>
<feature type="topological domain" description="Cytoplasmic" evidence="2">
    <location>
        <begin position="32"/>
        <end position="42"/>
    </location>
</feature>
<feature type="transmembrane region" description="Helical" evidence="2">
    <location>
        <begin position="43"/>
        <end position="63"/>
    </location>
</feature>
<feature type="topological domain" description="Extracellular" evidence="2">
    <location>
        <begin position="64"/>
        <end position="78"/>
    </location>
</feature>
<feature type="transmembrane region" description="Helical" evidence="2">
    <location>
        <begin position="79"/>
        <end position="99"/>
    </location>
</feature>
<feature type="topological domain" description="Cytoplasmic" evidence="2">
    <location>
        <begin position="100"/>
        <end position="101"/>
    </location>
</feature>
<feature type="transmembrane region" description="Helical" evidence="2">
    <location>
        <begin position="102"/>
        <end position="122"/>
    </location>
</feature>
<feature type="topological domain" description="Extracellular" evidence="2">
    <location>
        <begin position="123"/>
        <end position="136"/>
    </location>
</feature>
<feature type="transmembrane region" description="Helical" evidence="2">
    <location>
        <begin position="137"/>
        <end position="157"/>
    </location>
</feature>
<feature type="topological domain" description="Cytoplasmic" evidence="2">
    <location>
        <begin position="158"/>
        <end position="208"/>
    </location>
</feature>
<feature type="transmembrane region" description="Helical" evidence="2">
    <location>
        <begin position="209"/>
        <end position="229"/>
    </location>
</feature>
<feature type="topological domain" description="Extracellular" evidence="2">
    <location>
        <begin position="230"/>
        <end position="235"/>
    </location>
</feature>
<feature type="transmembrane region" description="Helical" evidence="2">
    <location>
        <begin position="236"/>
        <end position="256"/>
    </location>
</feature>
<feature type="topological domain" description="Cytoplasmic" evidence="2">
    <location>
        <begin position="257"/>
        <end position="278"/>
    </location>
</feature>
<feature type="transmembrane region" description="Helical" evidence="2">
    <location>
        <begin position="279"/>
        <end position="299"/>
    </location>
</feature>
<feature type="topological domain" description="Extracellular" evidence="2">
    <location>
        <begin position="300"/>
        <end position="344"/>
    </location>
</feature>
<feature type="binding site" evidence="2">
    <location>
        <begin position="209"/>
        <end position="216"/>
    </location>
    <ligand>
        <name>ATP</name>
        <dbReference type="ChEBI" id="CHEBI:30616"/>
    </ligand>
</feature>
<feature type="splice variant" id="VSP_057674" description="In isoform 2.">
    <original>VPKLNVYTAFFYFSISSFGVGLILNIIFL</original>
    <variation>GICFSLISPAVSLATNDQWHTLKHGVGTL</variation>
    <location>
        <begin position="228"/>
        <end position="256"/>
    </location>
</feature>
<feature type="splice variant" id="VSP_057675" description="In isoform 2.">
    <location>
        <begin position="257"/>
        <end position="344"/>
    </location>
</feature>
<keyword id="KW-0025">Alternative splicing</keyword>
<keyword id="KW-0067">ATP-binding</keyword>
<keyword id="KW-0472">Membrane</keyword>
<keyword id="KW-0547">Nucleotide-binding</keyword>
<keyword id="KW-1185">Reference proteome</keyword>
<keyword id="KW-0812">Transmembrane</keyword>
<keyword id="KW-1133">Transmembrane helix</keyword>
<keyword id="KW-0813">Transport</keyword>
<name>UPS3_ARATH</name>
<proteinExistence type="evidence at transcript level"/>